<comment type="function">
    <text evidence="1">Catalyzes the reversible reaction in which hydroxymethyl group from 5,10-methylenetetrahydrofolate is transferred onto alpha-ketoisovalerate to form ketopantoate.</text>
</comment>
<comment type="catalytic activity">
    <reaction evidence="1">
        <text>3-methyl-2-oxobutanoate + (6R)-5,10-methylene-5,6,7,8-tetrahydrofolate + H2O = 2-dehydropantoate + (6S)-5,6,7,8-tetrahydrofolate</text>
        <dbReference type="Rhea" id="RHEA:11824"/>
        <dbReference type="ChEBI" id="CHEBI:11561"/>
        <dbReference type="ChEBI" id="CHEBI:11851"/>
        <dbReference type="ChEBI" id="CHEBI:15377"/>
        <dbReference type="ChEBI" id="CHEBI:15636"/>
        <dbReference type="ChEBI" id="CHEBI:57453"/>
        <dbReference type="EC" id="2.1.2.11"/>
    </reaction>
</comment>
<comment type="cofactor">
    <cofactor evidence="1">
        <name>Mg(2+)</name>
        <dbReference type="ChEBI" id="CHEBI:18420"/>
    </cofactor>
    <text evidence="1">Binds 1 Mg(2+) ion per subunit.</text>
</comment>
<comment type="pathway">
    <text evidence="1">Cofactor biosynthesis; (R)-pantothenate biosynthesis; (R)-pantoate from 3-methyl-2-oxobutanoate: step 1/2.</text>
</comment>
<comment type="subunit">
    <text evidence="1">Homodecamer; pentamer of dimers.</text>
</comment>
<comment type="subcellular location">
    <subcellularLocation>
        <location evidence="1">Cytoplasm</location>
    </subcellularLocation>
</comment>
<comment type="similarity">
    <text evidence="1">Belongs to the PanB family.</text>
</comment>
<dbReference type="EC" id="2.1.2.11" evidence="1"/>
<dbReference type="EMBL" id="CP001103">
    <property type="protein sequence ID" value="AEA99812.1"/>
    <property type="molecule type" value="Genomic_DNA"/>
</dbReference>
<dbReference type="RefSeq" id="WP_012519845.1">
    <property type="nucleotide sequence ID" value="NC_011138.3"/>
</dbReference>
<dbReference type="SMR" id="B4RYN8"/>
<dbReference type="KEGG" id="amc:MADE_1018440"/>
<dbReference type="HOGENOM" id="CLU_036645_1_0_6"/>
<dbReference type="UniPathway" id="UPA00028">
    <property type="reaction ID" value="UER00003"/>
</dbReference>
<dbReference type="Proteomes" id="UP000001870">
    <property type="component" value="Chromosome"/>
</dbReference>
<dbReference type="GO" id="GO:0005737">
    <property type="term" value="C:cytoplasm"/>
    <property type="evidence" value="ECO:0007669"/>
    <property type="project" value="UniProtKB-SubCell"/>
</dbReference>
<dbReference type="GO" id="GO:0003864">
    <property type="term" value="F:3-methyl-2-oxobutanoate hydroxymethyltransferase activity"/>
    <property type="evidence" value="ECO:0007669"/>
    <property type="project" value="UniProtKB-UniRule"/>
</dbReference>
<dbReference type="GO" id="GO:0000287">
    <property type="term" value="F:magnesium ion binding"/>
    <property type="evidence" value="ECO:0007669"/>
    <property type="project" value="TreeGrafter"/>
</dbReference>
<dbReference type="GO" id="GO:0015940">
    <property type="term" value="P:pantothenate biosynthetic process"/>
    <property type="evidence" value="ECO:0007669"/>
    <property type="project" value="UniProtKB-UniRule"/>
</dbReference>
<dbReference type="CDD" id="cd06557">
    <property type="entry name" value="KPHMT-like"/>
    <property type="match status" value="1"/>
</dbReference>
<dbReference type="FunFam" id="3.20.20.60:FF:000003">
    <property type="entry name" value="3-methyl-2-oxobutanoate hydroxymethyltransferase"/>
    <property type="match status" value="1"/>
</dbReference>
<dbReference type="Gene3D" id="3.20.20.60">
    <property type="entry name" value="Phosphoenolpyruvate-binding domains"/>
    <property type="match status" value="1"/>
</dbReference>
<dbReference type="HAMAP" id="MF_00156">
    <property type="entry name" value="PanB"/>
    <property type="match status" value="1"/>
</dbReference>
<dbReference type="InterPro" id="IPR003700">
    <property type="entry name" value="Pantoate_hydroxy_MeTrfase"/>
</dbReference>
<dbReference type="InterPro" id="IPR015813">
    <property type="entry name" value="Pyrv/PenolPyrv_kinase-like_dom"/>
</dbReference>
<dbReference type="InterPro" id="IPR040442">
    <property type="entry name" value="Pyrv_kinase-like_dom_sf"/>
</dbReference>
<dbReference type="NCBIfam" id="TIGR00222">
    <property type="entry name" value="panB"/>
    <property type="match status" value="1"/>
</dbReference>
<dbReference type="NCBIfam" id="NF001452">
    <property type="entry name" value="PRK00311.1"/>
    <property type="match status" value="1"/>
</dbReference>
<dbReference type="PANTHER" id="PTHR20881">
    <property type="entry name" value="3-METHYL-2-OXOBUTANOATE HYDROXYMETHYLTRANSFERASE"/>
    <property type="match status" value="1"/>
</dbReference>
<dbReference type="PANTHER" id="PTHR20881:SF0">
    <property type="entry name" value="3-METHYL-2-OXOBUTANOATE HYDROXYMETHYLTRANSFERASE"/>
    <property type="match status" value="1"/>
</dbReference>
<dbReference type="Pfam" id="PF02548">
    <property type="entry name" value="Pantoate_transf"/>
    <property type="match status" value="1"/>
</dbReference>
<dbReference type="PIRSF" id="PIRSF000388">
    <property type="entry name" value="Pantoate_hydroxy_MeTrfase"/>
    <property type="match status" value="1"/>
</dbReference>
<dbReference type="SUPFAM" id="SSF51621">
    <property type="entry name" value="Phosphoenolpyruvate/pyruvate domain"/>
    <property type="match status" value="1"/>
</dbReference>
<gene>
    <name evidence="1" type="primary">panB</name>
    <name type="ordered locus">MADE_1018440</name>
</gene>
<reference key="1">
    <citation type="journal article" date="2008" name="ISME J.">
        <title>Comparative genomics of two ecotypes of the marine planktonic copiotroph Alteromonas macleodii suggests alternative lifestyles associated with different kinds of particulate organic matter.</title>
        <authorList>
            <person name="Ivars-Martinez E."/>
            <person name="Martin-Cuadrado A.-B."/>
            <person name="D'Auria G."/>
            <person name="Mira A."/>
            <person name="Ferriera S."/>
            <person name="Johnson J."/>
            <person name="Friedman R."/>
            <person name="Rodriguez-Valera F."/>
        </authorList>
    </citation>
    <scope>NUCLEOTIDE SEQUENCE [LARGE SCALE GENOMIC DNA]</scope>
    <source>
        <strain>DSM 17117 / CIP 110805 / LMG 28347 / Deep ecotype</strain>
    </source>
</reference>
<organism>
    <name type="scientific">Alteromonas mediterranea (strain DSM 17117 / CIP 110805 / LMG 28347 / Deep ecotype)</name>
    <dbReference type="NCBI Taxonomy" id="1774373"/>
    <lineage>
        <taxon>Bacteria</taxon>
        <taxon>Pseudomonadati</taxon>
        <taxon>Pseudomonadota</taxon>
        <taxon>Gammaproteobacteria</taxon>
        <taxon>Alteromonadales</taxon>
        <taxon>Alteromonadaceae</taxon>
        <taxon>Alteromonas/Salinimonas group</taxon>
        <taxon>Alteromonas</taxon>
    </lineage>
</organism>
<evidence type="ECO:0000255" key="1">
    <source>
        <dbReference type="HAMAP-Rule" id="MF_00156"/>
    </source>
</evidence>
<keyword id="KW-0963">Cytoplasm</keyword>
<keyword id="KW-0460">Magnesium</keyword>
<keyword id="KW-0479">Metal-binding</keyword>
<keyword id="KW-0566">Pantothenate biosynthesis</keyword>
<keyword id="KW-0808">Transferase</keyword>
<name>PANB_ALTMD</name>
<accession>B4RYN8</accession>
<accession>F2G684</accession>
<protein>
    <recommendedName>
        <fullName evidence="1">3-methyl-2-oxobutanoate hydroxymethyltransferase</fullName>
        <ecNumber evidence="1">2.1.2.11</ecNumber>
    </recommendedName>
    <alternativeName>
        <fullName evidence="1">Ketopantoate hydroxymethyltransferase</fullName>
        <shortName evidence="1">KPHMT</shortName>
    </alternativeName>
</protein>
<sequence length="264" mass="28275">MKKVTVSGLLKKKQAGEKITSLTAYDASFAKMFDEQGVDALLIGDSLGMVLQGEDDTLPVTIDDIAYHTKSVRRGTERAFVLADMPFMSYATPEQTYANAAKLMAAGASMVKMEGGSWLCDTIKGLNLRGVPVCGHLGLTPQSVHVFGGFKVQGREASQAEKLLSEAKALEEAGIQLLVLECVPSSLGKAVSEALTIPVIGIGAGKDTDGQILVMHDMFGISANYMPKFSKNYLVETGDMRKAVSKYIEDVQSGAFPSPEHSFQ</sequence>
<proteinExistence type="inferred from homology"/>
<feature type="chain" id="PRO_1000096938" description="3-methyl-2-oxobutanoate hydroxymethyltransferase">
    <location>
        <begin position="1"/>
        <end position="264"/>
    </location>
</feature>
<feature type="active site" description="Proton acceptor" evidence="1">
    <location>
        <position position="181"/>
    </location>
</feature>
<feature type="binding site" evidence="1">
    <location>
        <begin position="45"/>
        <end position="46"/>
    </location>
    <ligand>
        <name>3-methyl-2-oxobutanoate</name>
        <dbReference type="ChEBI" id="CHEBI:11851"/>
    </ligand>
</feature>
<feature type="binding site" evidence="1">
    <location>
        <position position="45"/>
    </location>
    <ligand>
        <name>Mg(2+)</name>
        <dbReference type="ChEBI" id="CHEBI:18420"/>
    </ligand>
</feature>
<feature type="binding site" evidence="1">
    <location>
        <position position="84"/>
    </location>
    <ligand>
        <name>3-methyl-2-oxobutanoate</name>
        <dbReference type="ChEBI" id="CHEBI:11851"/>
    </ligand>
</feature>
<feature type="binding site" evidence="1">
    <location>
        <position position="84"/>
    </location>
    <ligand>
        <name>Mg(2+)</name>
        <dbReference type="ChEBI" id="CHEBI:18420"/>
    </ligand>
</feature>
<feature type="binding site" evidence="1">
    <location>
        <position position="112"/>
    </location>
    <ligand>
        <name>3-methyl-2-oxobutanoate</name>
        <dbReference type="ChEBI" id="CHEBI:11851"/>
    </ligand>
</feature>
<feature type="binding site" evidence="1">
    <location>
        <position position="114"/>
    </location>
    <ligand>
        <name>Mg(2+)</name>
        <dbReference type="ChEBI" id="CHEBI:18420"/>
    </ligand>
</feature>